<accession>P67042</accession>
<accession>Q8YI37</accession>
<organism>
    <name type="scientific">Brucella melitensis biotype 1 (strain ATCC 23456 / CCUG 17765 / NCTC 10094 / 16M)</name>
    <dbReference type="NCBI Taxonomy" id="224914"/>
    <lineage>
        <taxon>Bacteria</taxon>
        <taxon>Pseudomonadati</taxon>
        <taxon>Pseudomonadota</taxon>
        <taxon>Alphaproteobacteria</taxon>
        <taxon>Hyphomicrobiales</taxon>
        <taxon>Brucellaceae</taxon>
        <taxon>Brucella/Ochrobactrum group</taxon>
        <taxon>Brucella</taxon>
    </lineage>
</organism>
<dbReference type="EC" id="2.1.1.45" evidence="1"/>
<dbReference type="EMBL" id="AE008917">
    <property type="protein sequence ID" value="AAL51789.1"/>
    <property type="molecule type" value="Genomic_DNA"/>
</dbReference>
<dbReference type="PIR" id="AB3328">
    <property type="entry name" value="AB3328"/>
</dbReference>
<dbReference type="RefSeq" id="WP_002964508.1">
    <property type="nucleotide sequence ID" value="NZ_GG703780.1"/>
</dbReference>
<dbReference type="PDB" id="3IX6">
    <property type="method" value="X-ray"/>
    <property type="resolution" value="2.20 A"/>
    <property type="chains" value="A/B=1-264"/>
</dbReference>
<dbReference type="PDBsum" id="3IX6"/>
<dbReference type="SMR" id="P67042"/>
<dbReference type="KEGG" id="bme:BMEI0608"/>
<dbReference type="KEGG" id="bmel:DK63_817"/>
<dbReference type="PATRIC" id="fig|224914.52.peg.857"/>
<dbReference type="eggNOG" id="COG0207">
    <property type="taxonomic scope" value="Bacteria"/>
</dbReference>
<dbReference type="PhylomeDB" id="P67042"/>
<dbReference type="UniPathway" id="UPA00575"/>
<dbReference type="EvolutionaryTrace" id="P67042"/>
<dbReference type="Proteomes" id="UP000000419">
    <property type="component" value="Chromosome I"/>
</dbReference>
<dbReference type="GO" id="GO:0005829">
    <property type="term" value="C:cytosol"/>
    <property type="evidence" value="ECO:0007669"/>
    <property type="project" value="TreeGrafter"/>
</dbReference>
<dbReference type="GO" id="GO:0004799">
    <property type="term" value="F:thymidylate synthase activity"/>
    <property type="evidence" value="ECO:0007669"/>
    <property type="project" value="UniProtKB-UniRule"/>
</dbReference>
<dbReference type="GO" id="GO:0006231">
    <property type="term" value="P:dTMP biosynthetic process"/>
    <property type="evidence" value="ECO:0007669"/>
    <property type="project" value="UniProtKB-UniRule"/>
</dbReference>
<dbReference type="GO" id="GO:0006235">
    <property type="term" value="P:dTTP biosynthetic process"/>
    <property type="evidence" value="ECO:0007669"/>
    <property type="project" value="UniProtKB-UniRule"/>
</dbReference>
<dbReference type="GO" id="GO:0032259">
    <property type="term" value="P:methylation"/>
    <property type="evidence" value="ECO:0007669"/>
    <property type="project" value="UniProtKB-KW"/>
</dbReference>
<dbReference type="CDD" id="cd00351">
    <property type="entry name" value="TS_Pyrimidine_HMase"/>
    <property type="match status" value="1"/>
</dbReference>
<dbReference type="FunFam" id="3.30.572.10:FF:000001">
    <property type="entry name" value="Thymidylate synthase"/>
    <property type="match status" value="1"/>
</dbReference>
<dbReference type="Gene3D" id="3.30.572.10">
    <property type="entry name" value="Thymidylate synthase/dCMP hydroxymethylase domain"/>
    <property type="match status" value="1"/>
</dbReference>
<dbReference type="HAMAP" id="MF_00008">
    <property type="entry name" value="Thymidy_synth_bact"/>
    <property type="match status" value="1"/>
</dbReference>
<dbReference type="InterPro" id="IPR045097">
    <property type="entry name" value="Thymidate_synth/dCMP_Mease"/>
</dbReference>
<dbReference type="InterPro" id="IPR023451">
    <property type="entry name" value="Thymidate_synth/dCMP_Mease_dom"/>
</dbReference>
<dbReference type="InterPro" id="IPR036926">
    <property type="entry name" value="Thymidate_synth/dCMP_Mease_sf"/>
</dbReference>
<dbReference type="InterPro" id="IPR000398">
    <property type="entry name" value="Thymidylate_synthase"/>
</dbReference>
<dbReference type="InterPro" id="IPR020940">
    <property type="entry name" value="Thymidylate_synthase_AS"/>
</dbReference>
<dbReference type="NCBIfam" id="NF002497">
    <property type="entry name" value="PRK01827.1-3"/>
    <property type="match status" value="1"/>
</dbReference>
<dbReference type="NCBIfam" id="NF002499">
    <property type="entry name" value="PRK01827.1-5"/>
    <property type="match status" value="1"/>
</dbReference>
<dbReference type="NCBIfam" id="TIGR03284">
    <property type="entry name" value="thym_sym"/>
    <property type="match status" value="2"/>
</dbReference>
<dbReference type="PANTHER" id="PTHR11548:SF9">
    <property type="entry name" value="THYMIDYLATE SYNTHASE"/>
    <property type="match status" value="1"/>
</dbReference>
<dbReference type="PANTHER" id="PTHR11548">
    <property type="entry name" value="THYMIDYLATE SYNTHASE 1"/>
    <property type="match status" value="1"/>
</dbReference>
<dbReference type="Pfam" id="PF00303">
    <property type="entry name" value="Thymidylat_synt"/>
    <property type="match status" value="1"/>
</dbReference>
<dbReference type="PRINTS" id="PR00108">
    <property type="entry name" value="THYMDSNTHASE"/>
</dbReference>
<dbReference type="SUPFAM" id="SSF55831">
    <property type="entry name" value="Thymidylate synthase/dCMP hydroxymethylase"/>
    <property type="match status" value="1"/>
</dbReference>
<dbReference type="PROSITE" id="PS00091">
    <property type="entry name" value="THYMIDYLATE_SYNTHASE"/>
    <property type="match status" value="1"/>
</dbReference>
<gene>
    <name evidence="1" type="primary">thyA</name>
    <name type="ordered locus">BMEI0608</name>
</gene>
<keyword id="KW-0002">3D-structure</keyword>
<keyword id="KW-0963">Cytoplasm</keyword>
<keyword id="KW-0489">Methyltransferase</keyword>
<keyword id="KW-0545">Nucleotide biosynthesis</keyword>
<keyword id="KW-0808">Transferase</keyword>
<proteinExistence type="evidence at protein level"/>
<reference key="1">
    <citation type="journal article" date="2002" name="Proc. Natl. Acad. Sci. U.S.A.">
        <title>The genome sequence of the facultative intracellular pathogen Brucella melitensis.</title>
        <authorList>
            <person name="DelVecchio V.G."/>
            <person name="Kapatral V."/>
            <person name="Redkar R.J."/>
            <person name="Patra G."/>
            <person name="Mujer C."/>
            <person name="Los T."/>
            <person name="Ivanova N."/>
            <person name="Anderson I."/>
            <person name="Bhattacharyya A."/>
            <person name="Lykidis A."/>
            <person name="Reznik G."/>
            <person name="Jablonski L."/>
            <person name="Larsen N."/>
            <person name="D'Souza M."/>
            <person name="Bernal A."/>
            <person name="Mazur M."/>
            <person name="Goltsman E."/>
            <person name="Selkov E."/>
            <person name="Elzer P.H."/>
            <person name="Hagius S."/>
            <person name="O'Callaghan D."/>
            <person name="Letesson J.-J."/>
            <person name="Haselkorn R."/>
            <person name="Kyrpides N.C."/>
            <person name="Overbeek R."/>
        </authorList>
    </citation>
    <scope>NUCLEOTIDE SEQUENCE [LARGE SCALE GENOMIC DNA]</scope>
    <source>
        <strain>ATCC 23456 / CCUG 17765 / NCTC 10094 / 16M</strain>
    </source>
</reference>
<name>TYSY_BRUME</name>
<evidence type="ECO:0000255" key="1">
    <source>
        <dbReference type="HAMAP-Rule" id="MF_00008"/>
    </source>
</evidence>
<evidence type="ECO:0007829" key="2">
    <source>
        <dbReference type="PDB" id="3IX6"/>
    </source>
</evidence>
<sequence length="264" mass="30330">MRTYLDLLQHVLDHGVDRDDRTGTGTRSVFGYQMRFDLEEGFPVLTTKKLHLRSIIHELLWFLKGDTNIAYLKENGVTIWDEWADENGDLGPVYGYQWRSWPAPDGRHIDQIANLLKMLHTNPQSRRLIVSAWNPALVDEMALPPCHCLFQFYVANGRLSCQLYQRSADIFLGVPFNIASYALLTMMIAQVTGLKPGEFIHTLGDAHIYSNHFEQARLQLTRTPKKLPVMHINPDVKDLFAFRFEDFRLDGYEADPTIKAPIAV</sequence>
<comment type="function">
    <text evidence="1">Catalyzes the reductive methylation of 2'-deoxyuridine-5'-monophosphate (dUMP) to 2'-deoxythymidine-5'-monophosphate (dTMP) while utilizing 5,10-methylenetetrahydrofolate (mTHF) as the methyl donor and reductant in the reaction, yielding dihydrofolate (DHF) as a by-product. This enzymatic reaction provides an intracellular de novo source of dTMP, an essential precursor for DNA biosynthesis.</text>
</comment>
<comment type="catalytic activity">
    <reaction evidence="1">
        <text>dUMP + (6R)-5,10-methylene-5,6,7,8-tetrahydrofolate = 7,8-dihydrofolate + dTMP</text>
        <dbReference type="Rhea" id="RHEA:12104"/>
        <dbReference type="ChEBI" id="CHEBI:15636"/>
        <dbReference type="ChEBI" id="CHEBI:57451"/>
        <dbReference type="ChEBI" id="CHEBI:63528"/>
        <dbReference type="ChEBI" id="CHEBI:246422"/>
        <dbReference type="EC" id="2.1.1.45"/>
    </reaction>
</comment>
<comment type="pathway">
    <text evidence="1">Pyrimidine metabolism; dTTP biosynthesis.</text>
</comment>
<comment type="subunit">
    <text evidence="1">Homodimer.</text>
</comment>
<comment type="subcellular location">
    <subcellularLocation>
        <location evidence="1">Cytoplasm</location>
    </subcellularLocation>
</comment>
<comment type="similarity">
    <text evidence="1">Belongs to the thymidylate synthase family. Bacterial-type ThyA subfamily.</text>
</comment>
<feature type="chain" id="PRO_0000140942" description="Thymidylate synthase">
    <location>
        <begin position="1"/>
        <end position="264"/>
    </location>
</feature>
<feature type="active site" description="Nucleophile" evidence="1">
    <location>
        <position position="146"/>
    </location>
</feature>
<feature type="binding site" description="in other chain" evidence="1">
    <location>
        <position position="21"/>
    </location>
    <ligand>
        <name>dUMP</name>
        <dbReference type="ChEBI" id="CHEBI:246422"/>
        <note>ligand shared between dimeric partners</note>
    </ligand>
</feature>
<feature type="binding site" evidence="1">
    <location>
        <position position="51"/>
    </location>
    <ligand>
        <name>(6R)-5,10-methylene-5,6,7,8-tetrahydrofolate</name>
        <dbReference type="ChEBI" id="CHEBI:15636"/>
    </ligand>
</feature>
<feature type="binding site" evidence="1">
    <location>
        <begin position="126"/>
        <end position="127"/>
    </location>
    <ligand>
        <name>dUMP</name>
        <dbReference type="ChEBI" id="CHEBI:246422"/>
        <note>ligand shared between dimeric partners</note>
    </ligand>
</feature>
<feature type="binding site" description="in other chain" evidence="1">
    <location>
        <begin position="166"/>
        <end position="169"/>
    </location>
    <ligand>
        <name>dUMP</name>
        <dbReference type="ChEBI" id="CHEBI:246422"/>
        <note>ligand shared between dimeric partners</note>
    </ligand>
</feature>
<feature type="binding site" evidence="1">
    <location>
        <position position="169"/>
    </location>
    <ligand>
        <name>(6R)-5,10-methylene-5,6,7,8-tetrahydrofolate</name>
        <dbReference type="ChEBI" id="CHEBI:15636"/>
    </ligand>
</feature>
<feature type="binding site" description="in other chain" evidence="1">
    <location>
        <position position="177"/>
    </location>
    <ligand>
        <name>dUMP</name>
        <dbReference type="ChEBI" id="CHEBI:246422"/>
        <note>ligand shared between dimeric partners</note>
    </ligand>
</feature>
<feature type="binding site" description="in other chain" evidence="1">
    <location>
        <begin position="207"/>
        <end position="209"/>
    </location>
    <ligand>
        <name>dUMP</name>
        <dbReference type="ChEBI" id="CHEBI:246422"/>
        <note>ligand shared between dimeric partners</note>
    </ligand>
</feature>
<feature type="binding site" evidence="1">
    <location>
        <position position="263"/>
    </location>
    <ligand>
        <name>(6R)-5,10-methylene-5,6,7,8-tetrahydrofolate</name>
        <dbReference type="ChEBI" id="CHEBI:15636"/>
    </ligand>
</feature>
<feature type="helix" evidence="2">
    <location>
        <begin position="2"/>
        <end position="14"/>
    </location>
</feature>
<feature type="strand" evidence="2">
    <location>
        <begin position="16"/>
        <end position="18"/>
    </location>
</feature>
<feature type="strand" evidence="2">
    <location>
        <begin position="26"/>
        <end position="37"/>
    </location>
</feature>
<feature type="helix" evidence="2">
    <location>
        <begin position="38"/>
        <end position="40"/>
    </location>
</feature>
<feature type="helix" evidence="2">
    <location>
        <begin position="52"/>
        <end position="64"/>
    </location>
</feature>
<feature type="helix" evidence="2">
    <location>
        <begin position="70"/>
        <end position="74"/>
    </location>
</feature>
<feature type="helix" evidence="2">
    <location>
        <begin position="81"/>
        <end position="83"/>
    </location>
</feature>
<feature type="helix" evidence="2">
    <location>
        <begin position="94"/>
        <end position="100"/>
    </location>
</feature>
<feature type="helix" evidence="2">
    <location>
        <begin position="111"/>
        <end position="121"/>
    </location>
</feature>
<feature type="strand" evidence="2">
    <location>
        <begin position="129"/>
        <end position="131"/>
    </location>
</feature>
<feature type="helix" evidence="2">
    <location>
        <begin position="135"/>
        <end position="138"/>
    </location>
</feature>
<feature type="strand" evidence="2">
    <location>
        <begin position="146"/>
        <end position="155"/>
    </location>
</feature>
<feature type="strand" evidence="2">
    <location>
        <begin position="158"/>
        <end position="169"/>
    </location>
</feature>
<feature type="turn" evidence="2">
    <location>
        <begin position="170"/>
        <end position="173"/>
    </location>
</feature>
<feature type="helix" evidence="2">
    <location>
        <begin position="174"/>
        <end position="192"/>
    </location>
</feature>
<feature type="strand" evidence="2">
    <location>
        <begin position="195"/>
        <end position="209"/>
    </location>
</feature>
<feature type="helix" evidence="2">
    <location>
        <begin position="210"/>
        <end position="212"/>
    </location>
</feature>
<feature type="helix" evidence="2">
    <location>
        <begin position="213"/>
        <end position="219"/>
    </location>
</feature>
<feature type="strand" evidence="2">
    <location>
        <begin position="229"/>
        <end position="232"/>
    </location>
</feature>
<feature type="helix" evidence="2">
    <location>
        <begin position="239"/>
        <end position="241"/>
    </location>
</feature>
<feature type="helix" evidence="2">
    <location>
        <begin position="244"/>
        <end position="246"/>
    </location>
</feature>
<feature type="strand" evidence="2">
    <location>
        <begin position="247"/>
        <end position="250"/>
    </location>
</feature>
<protein>
    <recommendedName>
        <fullName evidence="1">Thymidylate synthase</fullName>
        <shortName evidence="1">TS</shortName>
        <shortName evidence="1">TSase</shortName>
        <ecNumber evidence="1">2.1.1.45</ecNumber>
    </recommendedName>
</protein>